<name>MDH_BRUME</name>
<feature type="chain" id="PRO_0000113443" description="Malate dehydrogenase">
    <location>
        <begin position="1"/>
        <end position="320"/>
    </location>
</feature>
<feature type="active site" description="Proton acceptor" evidence="1">
    <location>
        <position position="176"/>
    </location>
</feature>
<feature type="binding site" evidence="1">
    <location>
        <begin position="10"/>
        <end position="15"/>
    </location>
    <ligand>
        <name>NAD(+)</name>
        <dbReference type="ChEBI" id="CHEBI:57540"/>
    </ligand>
</feature>
<feature type="binding site" evidence="1">
    <location>
        <position position="34"/>
    </location>
    <ligand>
        <name>NAD(+)</name>
        <dbReference type="ChEBI" id="CHEBI:57540"/>
    </ligand>
</feature>
<feature type="binding site" evidence="1">
    <location>
        <position position="83"/>
    </location>
    <ligand>
        <name>substrate</name>
    </ligand>
</feature>
<feature type="binding site" evidence="1">
    <location>
        <position position="89"/>
    </location>
    <ligand>
        <name>substrate</name>
    </ligand>
</feature>
<feature type="binding site" evidence="1">
    <location>
        <position position="96"/>
    </location>
    <ligand>
        <name>NAD(+)</name>
        <dbReference type="ChEBI" id="CHEBI:57540"/>
    </ligand>
</feature>
<feature type="binding site" evidence="1">
    <location>
        <begin position="119"/>
        <end position="121"/>
    </location>
    <ligand>
        <name>NAD(+)</name>
        <dbReference type="ChEBI" id="CHEBI:57540"/>
    </ligand>
</feature>
<feature type="binding site" evidence="1">
    <location>
        <position position="121"/>
    </location>
    <ligand>
        <name>substrate</name>
    </ligand>
</feature>
<feature type="binding site" evidence="1">
    <location>
        <position position="152"/>
    </location>
    <ligand>
        <name>substrate</name>
    </ligand>
</feature>
<proteinExistence type="inferred from homology"/>
<dbReference type="EC" id="1.1.1.37" evidence="1"/>
<dbReference type="EMBL" id="AE008917">
    <property type="protein sequence ID" value="AAL51319.1"/>
    <property type="status" value="ALT_INIT"/>
    <property type="molecule type" value="Genomic_DNA"/>
</dbReference>
<dbReference type="PIR" id="AD3269">
    <property type="entry name" value="AD3269"/>
</dbReference>
<dbReference type="RefSeq" id="WP_004684458.1">
    <property type="nucleotide sequence ID" value="NC_003317.1"/>
</dbReference>
<dbReference type="SMR" id="Q8YJE7"/>
<dbReference type="GeneID" id="29594238"/>
<dbReference type="KEGG" id="bme:BMEI0137"/>
<dbReference type="KEGG" id="bmel:DK63_1298"/>
<dbReference type="PATRIC" id="fig|224914.52.peg.1369"/>
<dbReference type="eggNOG" id="COG0039">
    <property type="taxonomic scope" value="Bacteria"/>
</dbReference>
<dbReference type="PhylomeDB" id="Q8YJE7"/>
<dbReference type="Proteomes" id="UP000000419">
    <property type="component" value="Chromosome I"/>
</dbReference>
<dbReference type="GO" id="GO:0004459">
    <property type="term" value="F:L-lactate dehydrogenase activity"/>
    <property type="evidence" value="ECO:0007669"/>
    <property type="project" value="TreeGrafter"/>
</dbReference>
<dbReference type="GO" id="GO:0030060">
    <property type="term" value="F:L-malate dehydrogenase (NAD+) activity"/>
    <property type="evidence" value="ECO:0007669"/>
    <property type="project" value="UniProtKB-UniRule"/>
</dbReference>
<dbReference type="GO" id="GO:0006089">
    <property type="term" value="P:lactate metabolic process"/>
    <property type="evidence" value="ECO:0007669"/>
    <property type="project" value="TreeGrafter"/>
</dbReference>
<dbReference type="GO" id="GO:0006099">
    <property type="term" value="P:tricarboxylic acid cycle"/>
    <property type="evidence" value="ECO:0007669"/>
    <property type="project" value="UniProtKB-UniRule"/>
</dbReference>
<dbReference type="CDD" id="cd01339">
    <property type="entry name" value="LDH-like_MDH"/>
    <property type="match status" value="1"/>
</dbReference>
<dbReference type="FunFam" id="3.40.50.720:FF:000018">
    <property type="entry name" value="Malate dehydrogenase"/>
    <property type="match status" value="1"/>
</dbReference>
<dbReference type="FunFam" id="3.90.110.10:FF:000004">
    <property type="entry name" value="Malate dehydrogenase"/>
    <property type="match status" value="1"/>
</dbReference>
<dbReference type="Gene3D" id="3.90.110.10">
    <property type="entry name" value="Lactate dehydrogenase/glycoside hydrolase, family 4, C-terminal"/>
    <property type="match status" value="1"/>
</dbReference>
<dbReference type="Gene3D" id="3.40.50.720">
    <property type="entry name" value="NAD(P)-binding Rossmann-like Domain"/>
    <property type="match status" value="1"/>
</dbReference>
<dbReference type="HAMAP" id="MF_00487">
    <property type="entry name" value="Malate_dehydrog_3"/>
    <property type="match status" value="1"/>
</dbReference>
<dbReference type="InterPro" id="IPR001557">
    <property type="entry name" value="L-lactate/malate_DH"/>
</dbReference>
<dbReference type="InterPro" id="IPR022383">
    <property type="entry name" value="Lactate/malate_DH_C"/>
</dbReference>
<dbReference type="InterPro" id="IPR001236">
    <property type="entry name" value="Lactate/malate_DH_N"/>
</dbReference>
<dbReference type="InterPro" id="IPR015955">
    <property type="entry name" value="Lactate_DH/Glyco_Ohase_4_C"/>
</dbReference>
<dbReference type="InterPro" id="IPR011275">
    <property type="entry name" value="Malate_DH_type3"/>
</dbReference>
<dbReference type="InterPro" id="IPR036291">
    <property type="entry name" value="NAD(P)-bd_dom_sf"/>
</dbReference>
<dbReference type="NCBIfam" id="TIGR01763">
    <property type="entry name" value="MalateDH_bact"/>
    <property type="match status" value="1"/>
</dbReference>
<dbReference type="NCBIfam" id="NF004863">
    <property type="entry name" value="PRK06223.1"/>
    <property type="match status" value="1"/>
</dbReference>
<dbReference type="PANTHER" id="PTHR43128">
    <property type="entry name" value="L-2-HYDROXYCARBOXYLATE DEHYDROGENASE (NAD(P)(+))"/>
    <property type="match status" value="1"/>
</dbReference>
<dbReference type="PANTHER" id="PTHR43128:SF16">
    <property type="entry name" value="L-LACTATE DEHYDROGENASE"/>
    <property type="match status" value="1"/>
</dbReference>
<dbReference type="Pfam" id="PF02866">
    <property type="entry name" value="Ldh_1_C"/>
    <property type="match status" value="1"/>
</dbReference>
<dbReference type="Pfam" id="PF00056">
    <property type="entry name" value="Ldh_1_N"/>
    <property type="match status" value="1"/>
</dbReference>
<dbReference type="PIRSF" id="PIRSF000102">
    <property type="entry name" value="Lac_mal_DH"/>
    <property type="match status" value="1"/>
</dbReference>
<dbReference type="PRINTS" id="PR00086">
    <property type="entry name" value="LLDHDRGNASE"/>
</dbReference>
<dbReference type="SUPFAM" id="SSF56327">
    <property type="entry name" value="LDH C-terminal domain-like"/>
    <property type="match status" value="1"/>
</dbReference>
<dbReference type="SUPFAM" id="SSF51735">
    <property type="entry name" value="NAD(P)-binding Rossmann-fold domains"/>
    <property type="match status" value="1"/>
</dbReference>
<reference key="1">
    <citation type="journal article" date="2002" name="Proc. Natl. Acad. Sci. U.S.A.">
        <title>The genome sequence of the facultative intracellular pathogen Brucella melitensis.</title>
        <authorList>
            <person name="DelVecchio V.G."/>
            <person name="Kapatral V."/>
            <person name="Redkar R.J."/>
            <person name="Patra G."/>
            <person name="Mujer C."/>
            <person name="Los T."/>
            <person name="Ivanova N."/>
            <person name="Anderson I."/>
            <person name="Bhattacharyya A."/>
            <person name="Lykidis A."/>
            <person name="Reznik G."/>
            <person name="Jablonski L."/>
            <person name="Larsen N."/>
            <person name="D'Souza M."/>
            <person name="Bernal A."/>
            <person name="Mazur M."/>
            <person name="Goltsman E."/>
            <person name="Selkov E."/>
            <person name="Elzer P.H."/>
            <person name="Hagius S."/>
            <person name="O'Callaghan D."/>
            <person name="Letesson J.-J."/>
            <person name="Haselkorn R."/>
            <person name="Kyrpides N.C."/>
            <person name="Overbeek R."/>
        </authorList>
    </citation>
    <scope>NUCLEOTIDE SEQUENCE [LARGE SCALE GENOMIC DNA]</scope>
    <source>
        <strain>ATCC 23456 / CCUG 17765 / NCTC 10094 / 16M</strain>
    </source>
</reference>
<keyword id="KW-0520">NAD</keyword>
<keyword id="KW-0560">Oxidoreductase</keyword>
<keyword id="KW-0816">Tricarboxylic acid cycle</keyword>
<comment type="function">
    <text evidence="1">Catalyzes the reversible oxidation of malate to oxaloacetate.</text>
</comment>
<comment type="catalytic activity">
    <reaction evidence="1">
        <text>(S)-malate + NAD(+) = oxaloacetate + NADH + H(+)</text>
        <dbReference type="Rhea" id="RHEA:21432"/>
        <dbReference type="ChEBI" id="CHEBI:15378"/>
        <dbReference type="ChEBI" id="CHEBI:15589"/>
        <dbReference type="ChEBI" id="CHEBI:16452"/>
        <dbReference type="ChEBI" id="CHEBI:57540"/>
        <dbReference type="ChEBI" id="CHEBI:57945"/>
        <dbReference type="EC" id="1.1.1.37"/>
    </reaction>
</comment>
<comment type="similarity">
    <text evidence="1">Belongs to the LDH/MDH superfamily. MDH type 3 family.</text>
</comment>
<comment type="sequence caution" evidence="2">
    <conflict type="erroneous initiation">
        <sequence resource="EMBL-CDS" id="AAL51319"/>
    </conflict>
</comment>
<evidence type="ECO:0000255" key="1">
    <source>
        <dbReference type="HAMAP-Rule" id="MF_00487"/>
    </source>
</evidence>
<evidence type="ECO:0000305" key="2"/>
<gene>
    <name evidence="1" type="primary">mdh</name>
    <name type="ordered locus">BMEI0137</name>
</gene>
<organism>
    <name type="scientific">Brucella melitensis biotype 1 (strain ATCC 23456 / CCUG 17765 / NCTC 10094 / 16M)</name>
    <dbReference type="NCBI Taxonomy" id="224914"/>
    <lineage>
        <taxon>Bacteria</taxon>
        <taxon>Pseudomonadati</taxon>
        <taxon>Pseudomonadota</taxon>
        <taxon>Alphaproteobacteria</taxon>
        <taxon>Hyphomicrobiales</taxon>
        <taxon>Brucellaceae</taxon>
        <taxon>Brucella/Ochrobactrum group</taxon>
        <taxon>Brucella</taxon>
    </lineage>
</organism>
<protein>
    <recommendedName>
        <fullName evidence="1">Malate dehydrogenase</fullName>
        <ecNumber evidence="1">1.1.1.37</ecNumber>
    </recommendedName>
</protein>
<sequence length="320" mass="33666">MARNKIALIGSGMIGGTLAHLAGLKELGDVVLFDIAEGTPQGKGLDIAESSPVDGFDAKFTGANDYAAIEGADVVIVTAGVPRKPGMSRDDLLGINLKVMEQVGAGIKKYAPEAFVICITNPLDAMVWALQKFSGLPAHKVVGMAGVLDSARFRYFLSEEFNVSVEDVTAFVLGGHGDSMVPLARYSTVAGIPLSDLVKMGWTSQDKLDKIIQRTRDGGAEIVGLLKTGSAFYAPAASAIQMAESYLKDKKRVLPVAAQLSGQYGVKDMYVGVPTVIGANGVERIIEIDLDKDEKAQFDKSVASVAGLCEACIGIAPSLK</sequence>
<accession>Q8YJE7</accession>